<dbReference type="EC" id="2.2.1.7" evidence="1"/>
<dbReference type="EMBL" id="CP000127">
    <property type="protein sequence ID" value="ABA58215.1"/>
    <property type="molecule type" value="Genomic_DNA"/>
</dbReference>
<dbReference type="RefSeq" id="WP_002811148.1">
    <property type="nucleotide sequence ID" value="NC_007484.1"/>
</dbReference>
<dbReference type="SMR" id="Q3JAD1"/>
<dbReference type="FunCoup" id="Q3JAD1">
    <property type="interactions" value="523"/>
</dbReference>
<dbReference type="STRING" id="323261.Noc_1743"/>
<dbReference type="KEGG" id="noc:Noc_1743"/>
<dbReference type="eggNOG" id="COG1154">
    <property type="taxonomic scope" value="Bacteria"/>
</dbReference>
<dbReference type="HOGENOM" id="CLU_009227_1_4_6"/>
<dbReference type="InParanoid" id="Q3JAD1"/>
<dbReference type="UniPathway" id="UPA00064">
    <property type="reaction ID" value="UER00091"/>
</dbReference>
<dbReference type="Proteomes" id="UP000006838">
    <property type="component" value="Chromosome"/>
</dbReference>
<dbReference type="GO" id="GO:0005829">
    <property type="term" value="C:cytosol"/>
    <property type="evidence" value="ECO:0007669"/>
    <property type="project" value="TreeGrafter"/>
</dbReference>
<dbReference type="GO" id="GO:0008661">
    <property type="term" value="F:1-deoxy-D-xylulose-5-phosphate synthase activity"/>
    <property type="evidence" value="ECO:0007669"/>
    <property type="project" value="UniProtKB-UniRule"/>
</dbReference>
<dbReference type="GO" id="GO:0000287">
    <property type="term" value="F:magnesium ion binding"/>
    <property type="evidence" value="ECO:0007669"/>
    <property type="project" value="UniProtKB-UniRule"/>
</dbReference>
<dbReference type="GO" id="GO:0030976">
    <property type="term" value="F:thiamine pyrophosphate binding"/>
    <property type="evidence" value="ECO:0007669"/>
    <property type="project" value="UniProtKB-UniRule"/>
</dbReference>
<dbReference type="GO" id="GO:0052865">
    <property type="term" value="P:1-deoxy-D-xylulose 5-phosphate biosynthetic process"/>
    <property type="evidence" value="ECO:0007669"/>
    <property type="project" value="UniProtKB-UniPathway"/>
</dbReference>
<dbReference type="GO" id="GO:0019288">
    <property type="term" value="P:isopentenyl diphosphate biosynthetic process, methylerythritol 4-phosphate pathway"/>
    <property type="evidence" value="ECO:0007669"/>
    <property type="project" value="TreeGrafter"/>
</dbReference>
<dbReference type="GO" id="GO:0016114">
    <property type="term" value="P:terpenoid biosynthetic process"/>
    <property type="evidence" value="ECO:0007669"/>
    <property type="project" value="UniProtKB-UniRule"/>
</dbReference>
<dbReference type="GO" id="GO:0009228">
    <property type="term" value="P:thiamine biosynthetic process"/>
    <property type="evidence" value="ECO:0007669"/>
    <property type="project" value="UniProtKB-UniRule"/>
</dbReference>
<dbReference type="CDD" id="cd02007">
    <property type="entry name" value="TPP_DXS"/>
    <property type="match status" value="1"/>
</dbReference>
<dbReference type="CDD" id="cd07033">
    <property type="entry name" value="TPP_PYR_DXS_TK_like"/>
    <property type="match status" value="1"/>
</dbReference>
<dbReference type="FunFam" id="3.40.50.920:FF:000002">
    <property type="entry name" value="1-deoxy-D-xylulose-5-phosphate synthase"/>
    <property type="match status" value="1"/>
</dbReference>
<dbReference type="FunFam" id="3.40.50.970:FF:000005">
    <property type="entry name" value="1-deoxy-D-xylulose-5-phosphate synthase"/>
    <property type="match status" value="1"/>
</dbReference>
<dbReference type="Gene3D" id="3.40.50.920">
    <property type="match status" value="1"/>
</dbReference>
<dbReference type="Gene3D" id="3.40.50.970">
    <property type="match status" value="2"/>
</dbReference>
<dbReference type="HAMAP" id="MF_00315">
    <property type="entry name" value="DXP_synth"/>
    <property type="match status" value="1"/>
</dbReference>
<dbReference type="InterPro" id="IPR005477">
    <property type="entry name" value="Dxylulose-5-P_synthase"/>
</dbReference>
<dbReference type="InterPro" id="IPR029061">
    <property type="entry name" value="THDP-binding"/>
</dbReference>
<dbReference type="InterPro" id="IPR009014">
    <property type="entry name" value="Transketo_C/PFOR_II"/>
</dbReference>
<dbReference type="InterPro" id="IPR005475">
    <property type="entry name" value="Transketolase-like_Pyr-bd"/>
</dbReference>
<dbReference type="InterPro" id="IPR020826">
    <property type="entry name" value="Transketolase_BS"/>
</dbReference>
<dbReference type="InterPro" id="IPR033248">
    <property type="entry name" value="Transketolase_C"/>
</dbReference>
<dbReference type="InterPro" id="IPR049557">
    <property type="entry name" value="Transketolase_CS"/>
</dbReference>
<dbReference type="NCBIfam" id="TIGR00204">
    <property type="entry name" value="dxs"/>
    <property type="match status" value="1"/>
</dbReference>
<dbReference type="NCBIfam" id="NF003933">
    <property type="entry name" value="PRK05444.2-2"/>
    <property type="match status" value="1"/>
</dbReference>
<dbReference type="PANTHER" id="PTHR43322">
    <property type="entry name" value="1-D-DEOXYXYLULOSE 5-PHOSPHATE SYNTHASE-RELATED"/>
    <property type="match status" value="1"/>
</dbReference>
<dbReference type="PANTHER" id="PTHR43322:SF5">
    <property type="entry name" value="1-DEOXY-D-XYLULOSE-5-PHOSPHATE SYNTHASE, CHLOROPLASTIC"/>
    <property type="match status" value="1"/>
</dbReference>
<dbReference type="Pfam" id="PF13292">
    <property type="entry name" value="DXP_synthase_N"/>
    <property type="match status" value="1"/>
</dbReference>
<dbReference type="Pfam" id="PF02779">
    <property type="entry name" value="Transket_pyr"/>
    <property type="match status" value="1"/>
</dbReference>
<dbReference type="Pfam" id="PF02780">
    <property type="entry name" value="Transketolase_C"/>
    <property type="match status" value="1"/>
</dbReference>
<dbReference type="SMART" id="SM00861">
    <property type="entry name" value="Transket_pyr"/>
    <property type="match status" value="1"/>
</dbReference>
<dbReference type="SUPFAM" id="SSF52518">
    <property type="entry name" value="Thiamin diphosphate-binding fold (THDP-binding)"/>
    <property type="match status" value="2"/>
</dbReference>
<dbReference type="SUPFAM" id="SSF52922">
    <property type="entry name" value="TK C-terminal domain-like"/>
    <property type="match status" value="1"/>
</dbReference>
<dbReference type="PROSITE" id="PS00801">
    <property type="entry name" value="TRANSKETOLASE_1"/>
    <property type="match status" value="1"/>
</dbReference>
<dbReference type="PROSITE" id="PS00802">
    <property type="entry name" value="TRANSKETOLASE_2"/>
    <property type="match status" value="1"/>
</dbReference>
<reference key="1">
    <citation type="journal article" date="2006" name="Appl. Environ. Microbiol.">
        <title>Complete genome sequence of the marine, chemolithoautotrophic, ammonia-oxidizing bacterium Nitrosococcus oceani ATCC 19707.</title>
        <authorList>
            <person name="Klotz M.G."/>
            <person name="Arp D.J."/>
            <person name="Chain P.S.G."/>
            <person name="El-Sheikh A.F."/>
            <person name="Hauser L.J."/>
            <person name="Hommes N.G."/>
            <person name="Larimer F.W."/>
            <person name="Malfatti S.A."/>
            <person name="Norton J.M."/>
            <person name="Poret-Peterson A.T."/>
            <person name="Vergez L.M."/>
            <person name="Ward B.B."/>
        </authorList>
    </citation>
    <scope>NUCLEOTIDE SEQUENCE [LARGE SCALE GENOMIC DNA]</scope>
    <source>
        <strain>ATCC 19707 / BCRC 17464 / JCM 30415 / NCIMB 11848 / C-107</strain>
    </source>
</reference>
<protein>
    <recommendedName>
        <fullName evidence="1">1-deoxy-D-xylulose-5-phosphate synthase</fullName>
        <ecNumber evidence="1">2.2.1.7</ecNumber>
    </recommendedName>
    <alternativeName>
        <fullName evidence="1">1-deoxyxylulose-5-phosphate synthase</fullName>
        <shortName evidence="1">DXP synthase</shortName>
        <shortName evidence="1">DXPS</shortName>
    </alternativeName>
</protein>
<accession>Q3JAD1</accession>
<keyword id="KW-0414">Isoprene biosynthesis</keyword>
<keyword id="KW-0460">Magnesium</keyword>
<keyword id="KW-0479">Metal-binding</keyword>
<keyword id="KW-1185">Reference proteome</keyword>
<keyword id="KW-0784">Thiamine biosynthesis</keyword>
<keyword id="KW-0786">Thiamine pyrophosphate</keyword>
<keyword id="KW-0808">Transferase</keyword>
<evidence type="ECO:0000255" key="1">
    <source>
        <dbReference type="HAMAP-Rule" id="MF_00315"/>
    </source>
</evidence>
<feature type="chain" id="PRO_0000256445" description="1-deoxy-D-xylulose-5-phosphate synthase">
    <location>
        <begin position="1"/>
        <end position="640"/>
    </location>
</feature>
<feature type="binding site" evidence="1">
    <location>
        <position position="79"/>
    </location>
    <ligand>
        <name>thiamine diphosphate</name>
        <dbReference type="ChEBI" id="CHEBI:58937"/>
    </ligand>
</feature>
<feature type="binding site" evidence="1">
    <location>
        <begin position="120"/>
        <end position="122"/>
    </location>
    <ligand>
        <name>thiamine diphosphate</name>
        <dbReference type="ChEBI" id="CHEBI:58937"/>
    </ligand>
</feature>
<feature type="binding site" evidence="1">
    <location>
        <position position="151"/>
    </location>
    <ligand>
        <name>Mg(2+)</name>
        <dbReference type="ChEBI" id="CHEBI:18420"/>
    </ligand>
</feature>
<feature type="binding site" evidence="1">
    <location>
        <begin position="152"/>
        <end position="153"/>
    </location>
    <ligand>
        <name>thiamine diphosphate</name>
        <dbReference type="ChEBI" id="CHEBI:58937"/>
    </ligand>
</feature>
<feature type="binding site" evidence="1">
    <location>
        <position position="180"/>
    </location>
    <ligand>
        <name>Mg(2+)</name>
        <dbReference type="ChEBI" id="CHEBI:18420"/>
    </ligand>
</feature>
<feature type="binding site" evidence="1">
    <location>
        <position position="180"/>
    </location>
    <ligand>
        <name>thiamine diphosphate</name>
        <dbReference type="ChEBI" id="CHEBI:58937"/>
    </ligand>
</feature>
<feature type="binding site" evidence="1">
    <location>
        <position position="288"/>
    </location>
    <ligand>
        <name>thiamine diphosphate</name>
        <dbReference type="ChEBI" id="CHEBI:58937"/>
    </ligand>
</feature>
<feature type="binding site" evidence="1">
    <location>
        <position position="372"/>
    </location>
    <ligand>
        <name>thiamine diphosphate</name>
        <dbReference type="ChEBI" id="CHEBI:58937"/>
    </ligand>
</feature>
<sequence>MASVTSYPLLEQIDSPERLRRLPESDLETLAEELRDFLLHSVARSGGHLAAGLGTIELTIALHYIFATPEDRLVWDVGHQAYPHKVLTGRRERLGTIRQAGGLAPFPSRHESPYDTFGVGHSSTSISAALGMAIAANEKGEKRKTVAIIGDGGMTAGMAYEALDHAGALGADLLVILNDNEMSISPNVGAISSYLTRLLSGRVYSTVREGSKKVLERMPPPMWELARRTEEHVKGMVAPGTLFEEMGFNYFGPIDGHDLSSLIRTLRNLHKLTGPRLLHIVTCKGKGYTLAEENPVTYHGVTPFDPKVGIQQGPQKPSSAMSYTQVFSQWLCDMAAQDGLLVGITPAMREGSGLVKFSECFPERYFDVAIAEQHSVTLAAGMACDGLKPVVAIYSTFLQRAYDQLIHDVALQNLPVLFAIDRAGVVGPDGPTHAGSFDLTYLRCIPNLVVMAPADENECRQMLYTGFLLNQPAAVRYPRGKGPGVAVEASMTALPLGKAELKRKGRGIAILAFGATVAPALEAAEKLDATVVNMRFVKPLDEDLVLEMAMNHELLVTVEDNVIAGGAGSAVSECLAYHGVSVPLLLHGLPDNFLEHGSREALLEQCHLNAEGILQRVKTYRARLPKSKASVVSSAAGTHG</sequence>
<gene>
    <name evidence="1" type="primary">dxs</name>
    <name type="ordered locus">Noc_1743</name>
</gene>
<name>DXS_NITOC</name>
<organism>
    <name type="scientific">Nitrosococcus oceani (strain ATCC 19707 / BCRC 17464 / JCM 30415 / NCIMB 11848 / C-107)</name>
    <dbReference type="NCBI Taxonomy" id="323261"/>
    <lineage>
        <taxon>Bacteria</taxon>
        <taxon>Pseudomonadati</taxon>
        <taxon>Pseudomonadota</taxon>
        <taxon>Gammaproteobacteria</taxon>
        <taxon>Chromatiales</taxon>
        <taxon>Chromatiaceae</taxon>
        <taxon>Nitrosococcus</taxon>
    </lineage>
</organism>
<comment type="function">
    <text evidence="1">Catalyzes the acyloin condensation reaction between C atoms 2 and 3 of pyruvate and glyceraldehyde 3-phosphate to yield 1-deoxy-D-xylulose-5-phosphate (DXP).</text>
</comment>
<comment type="catalytic activity">
    <reaction evidence="1">
        <text>D-glyceraldehyde 3-phosphate + pyruvate + H(+) = 1-deoxy-D-xylulose 5-phosphate + CO2</text>
        <dbReference type="Rhea" id="RHEA:12605"/>
        <dbReference type="ChEBI" id="CHEBI:15361"/>
        <dbReference type="ChEBI" id="CHEBI:15378"/>
        <dbReference type="ChEBI" id="CHEBI:16526"/>
        <dbReference type="ChEBI" id="CHEBI:57792"/>
        <dbReference type="ChEBI" id="CHEBI:59776"/>
        <dbReference type="EC" id="2.2.1.7"/>
    </reaction>
</comment>
<comment type="cofactor">
    <cofactor evidence="1">
        <name>Mg(2+)</name>
        <dbReference type="ChEBI" id="CHEBI:18420"/>
    </cofactor>
    <text evidence="1">Binds 1 Mg(2+) ion per subunit.</text>
</comment>
<comment type="cofactor">
    <cofactor evidence="1">
        <name>thiamine diphosphate</name>
        <dbReference type="ChEBI" id="CHEBI:58937"/>
    </cofactor>
    <text evidence="1">Binds 1 thiamine pyrophosphate per subunit.</text>
</comment>
<comment type="pathway">
    <text evidence="1">Metabolic intermediate biosynthesis; 1-deoxy-D-xylulose 5-phosphate biosynthesis; 1-deoxy-D-xylulose 5-phosphate from D-glyceraldehyde 3-phosphate and pyruvate: step 1/1.</text>
</comment>
<comment type="subunit">
    <text evidence="1">Homodimer.</text>
</comment>
<comment type="similarity">
    <text evidence="1">Belongs to the transketolase family. DXPS subfamily.</text>
</comment>
<proteinExistence type="inferred from homology"/>